<feature type="chain" id="PRO_0000241973" description="Arginine--tRNA ligase">
    <location>
        <begin position="1"/>
        <end position="596"/>
    </location>
</feature>
<feature type="short sequence motif" description="'HIGH' region">
    <location>
        <begin position="128"/>
        <end position="138"/>
    </location>
</feature>
<protein>
    <recommendedName>
        <fullName evidence="1">Arginine--tRNA ligase</fullName>
        <ecNumber evidence="1">6.1.1.19</ecNumber>
    </recommendedName>
    <alternativeName>
        <fullName evidence="1">Arginyl-tRNA synthetase</fullName>
        <shortName evidence="1">ArgRS</shortName>
    </alternativeName>
</protein>
<evidence type="ECO:0000255" key="1">
    <source>
        <dbReference type="HAMAP-Rule" id="MF_00123"/>
    </source>
</evidence>
<keyword id="KW-0030">Aminoacyl-tRNA synthetase</keyword>
<keyword id="KW-0067">ATP-binding</keyword>
<keyword id="KW-0963">Cytoplasm</keyword>
<keyword id="KW-0436">Ligase</keyword>
<keyword id="KW-0547">Nucleotide-binding</keyword>
<keyword id="KW-0648">Protein biosynthesis</keyword>
<gene>
    <name evidence="1" type="primary">argS</name>
    <name type="ordered locus">ACIAD0164</name>
</gene>
<accession>Q6FFM0</accession>
<dbReference type="EC" id="6.1.1.19" evidence="1"/>
<dbReference type="EMBL" id="CR543861">
    <property type="protein sequence ID" value="CAG67137.1"/>
    <property type="molecule type" value="Genomic_DNA"/>
</dbReference>
<dbReference type="RefSeq" id="WP_004930584.1">
    <property type="nucleotide sequence ID" value="NC_005966.1"/>
</dbReference>
<dbReference type="SMR" id="Q6FFM0"/>
<dbReference type="STRING" id="202950.GCA_001485005_01898"/>
<dbReference type="GeneID" id="45232683"/>
<dbReference type="KEGG" id="aci:ACIAD0164"/>
<dbReference type="eggNOG" id="COG0018">
    <property type="taxonomic scope" value="Bacteria"/>
</dbReference>
<dbReference type="HOGENOM" id="CLU_006406_0_1_6"/>
<dbReference type="OrthoDB" id="9803211at2"/>
<dbReference type="BioCyc" id="ASP62977:ACIAD_RS00765-MONOMER"/>
<dbReference type="Proteomes" id="UP000000430">
    <property type="component" value="Chromosome"/>
</dbReference>
<dbReference type="GO" id="GO:0005737">
    <property type="term" value="C:cytoplasm"/>
    <property type="evidence" value="ECO:0007669"/>
    <property type="project" value="UniProtKB-SubCell"/>
</dbReference>
<dbReference type="GO" id="GO:0004814">
    <property type="term" value="F:arginine-tRNA ligase activity"/>
    <property type="evidence" value="ECO:0007669"/>
    <property type="project" value="UniProtKB-UniRule"/>
</dbReference>
<dbReference type="GO" id="GO:0005524">
    <property type="term" value="F:ATP binding"/>
    <property type="evidence" value="ECO:0007669"/>
    <property type="project" value="UniProtKB-UniRule"/>
</dbReference>
<dbReference type="GO" id="GO:0006420">
    <property type="term" value="P:arginyl-tRNA aminoacylation"/>
    <property type="evidence" value="ECO:0007669"/>
    <property type="project" value="UniProtKB-UniRule"/>
</dbReference>
<dbReference type="CDD" id="cd00671">
    <property type="entry name" value="ArgRS_core"/>
    <property type="match status" value="1"/>
</dbReference>
<dbReference type="FunFam" id="1.10.730.10:FF:000008">
    <property type="entry name" value="Arginine--tRNA ligase"/>
    <property type="match status" value="1"/>
</dbReference>
<dbReference type="Gene3D" id="3.30.1360.70">
    <property type="entry name" value="Arginyl tRNA synthetase N-terminal domain"/>
    <property type="match status" value="1"/>
</dbReference>
<dbReference type="Gene3D" id="3.40.50.620">
    <property type="entry name" value="HUPs"/>
    <property type="match status" value="1"/>
</dbReference>
<dbReference type="Gene3D" id="1.10.730.10">
    <property type="entry name" value="Isoleucyl-tRNA Synthetase, Domain 1"/>
    <property type="match status" value="1"/>
</dbReference>
<dbReference type="HAMAP" id="MF_00123">
    <property type="entry name" value="Arg_tRNA_synth"/>
    <property type="match status" value="1"/>
</dbReference>
<dbReference type="InterPro" id="IPR001278">
    <property type="entry name" value="Arg-tRNA-ligase"/>
</dbReference>
<dbReference type="InterPro" id="IPR005148">
    <property type="entry name" value="Arg-tRNA-synth_N"/>
</dbReference>
<dbReference type="InterPro" id="IPR036695">
    <property type="entry name" value="Arg-tRNA-synth_N_sf"/>
</dbReference>
<dbReference type="InterPro" id="IPR035684">
    <property type="entry name" value="ArgRS_core"/>
</dbReference>
<dbReference type="InterPro" id="IPR008909">
    <property type="entry name" value="DALR_anticod-bd"/>
</dbReference>
<dbReference type="InterPro" id="IPR014729">
    <property type="entry name" value="Rossmann-like_a/b/a_fold"/>
</dbReference>
<dbReference type="InterPro" id="IPR009080">
    <property type="entry name" value="tRNAsynth_Ia_anticodon-bd"/>
</dbReference>
<dbReference type="NCBIfam" id="TIGR00456">
    <property type="entry name" value="argS"/>
    <property type="match status" value="1"/>
</dbReference>
<dbReference type="PANTHER" id="PTHR11956:SF5">
    <property type="entry name" value="ARGININE--TRNA LIGASE, CYTOPLASMIC"/>
    <property type="match status" value="1"/>
</dbReference>
<dbReference type="PANTHER" id="PTHR11956">
    <property type="entry name" value="ARGINYL-TRNA SYNTHETASE"/>
    <property type="match status" value="1"/>
</dbReference>
<dbReference type="Pfam" id="PF03485">
    <property type="entry name" value="Arg_tRNA_synt_N"/>
    <property type="match status" value="1"/>
</dbReference>
<dbReference type="Pfam" id="PF05746">
    <property type="entry name" value="DALR_1"/>
    <property type="match status" value="1"/>
</dbReference>
<dbReference type="Pfam" id="PF00750">
    <property type="entry name" value="tRNA-synt_1d"/>
    <property type="match status" value="2"/>
</dbReference>
<dbReference type="PRINTS" id="PR01038">
    <property type="entry name" value="TRNASYNTHARG"/>
</dbReference>
<dbReference type="SMART" id="SM01016">
    <property type="entry name" value="Arg_tRNA_synt_N"/>
    <property type="match status" value="1"/>
</dbReference>
<dbReference type="SMART" id="SM00836">
    <property type="entry name" value="DALR_1"/>
    <property type="match status" value="1"/>
</dbReference>
<dbReference type="SUPFAM" id="SSF47323">
    <property type="entry name" value="Anticodon-binding domain of a subclass of class I aminoacyl-tRNA synthetases"/>
    <property type="match status" value="1"/>
</dbReference>
<dbReference type="SUPFAM" id="SSF55190">
    <property type="entry name" value="Arginyl-tRNA synthetase (ArgRS), N-terminal 'additional' domain"/>
    <property type="match status" value="1"/>
</dbReference>
<dbReference type="SUPFAM" id="SSF52374">
    <property type="entry name" value="Nucleotidylyl transferase"/>
    <property type="match status" value="1"/>
</dbReference>
<proteinExistence type="inferred from homology"/>
<sequence length="596" mass="66918">MNTAIQAALDHVVQSLQQEGILPSDWNNNSTLTRTKDRSHGDFASNIAMVGSKAAGMKPRDLAEKILASLPEVADITKAEIAGPGFINFFLNADQRFAVLDQIQAQGQYYGQTQVNAEKKIQVEFVSANPTSSLHVGHGRGAAYGMTVANLLEATGAQVDREYYVNDAGRQMDILATSTYLRYLELLGQPLVFPKNAYQGDYVKEIAQSIIDKDGDAYVRSVADVYRNVPEDVQYAEELDSEGNKVVLSGDKEKHIDGLIANSQQLIGQGYRVFHQAALKAILDDIKDDLADFGVTFDQWFSEASLTQKIDEALQTLDQRGYLYEKEGNIWFKSTKFGDEKDRVVKRRNGQTTYFASDIAYHLDKLQRGYTHIVDIWGSDHHGYIARVKAAIDAMGYDSSKLTVLLVQFVSLWRGGEMVQMSSRSGQFVTLRELRQEVGNDAARFYYVMRKSEQHIDFDLDLAVSQSKDNAVYYIQYAHARICRMLEKANSTQMRFNQTQARQFANRLDLDAETEILAKLAAYPDILVRAANAYEPHQIGNYLKELAALFHGWYNEHKVLTEDVELTQARLLLSVNVQQVLRNGLDLLGVSAPEAM</sequence>
<organism>
    <name type="scientific">Acinetobacter baylyi (strain ATCC 33305 / BD413 / ADP1)</name>
    <dbReference type="NCBI Taxonomy" id="62977"/>
    <lineage>
        <taxon>Bacteria</taxon>
        <taxon>Pseudomonadati</taxon>
        <taxon>Pseudomonadota</taxon>
        <taxon>Gammaproteobacteria</taxon>
        <taxon>Moraxellales</taxon>
        <taxon>Moraxellaceae</taxon>
        <taxon>Acinetobacter</taxon>
    </lineage>
</organism>
<name>SYR_ACIAD</name>
<comment type="catalytic activity">
    <reaction evidence="1">
        <text>tRNA(Arg) + L-arginine + ATP = L-arginyl-tRNA(Arg) + AMP + diphosphate</text>
        <dbReference type="Rhea" id="RHEA:20301"/>
        <dbReference type="Rhea" id="RHEA-COMP:9658"/>
        <dbReference type="Rhea" id="RHEA-COMP:9673"/>
        <dbReference type="ChEBI" id="CHEBI:30616"/>
        <dbReference type="ChEBI" id="CHEBI:32682"/>
        <dbReference type="ChEBI" id="CHEBI:33019"/>
        <dbReference type="ChEBI" id="CHEBI:78442"/>
        <dbReference type="ChEBI" id="CHEBI:78513"/>
        <dbReference type="ChEBI" id="CHEBI:456215"/>
        <dbReference type="EC" id="6.1.1.19"/>
    </reaction>
</comment>
<comment type="subunit">
    <text evidence="1">Monomer.</text>
</comment>
<comment type="subcellular location">
    <subcellularLocation>
        <location evidence="1">Cytoplasm</location>
    </subcellularLocation>
</comment>
<comment type="similarity">
    <text evidence="1">Belongs to the class-I aminoacyl-tRNA synthetase family.</text>
</comment>
<reference key="1">
    <citation type="journal article" date="2004" name="Nucleic Acids Res.">
        <title>Unique features revealed by the genome sequence of Acinetobacter sp. ADP1, a versatile and naturally transformation competent bacterium.</title>
        <authorList>
            <person name="Barbe V."/>
            <person name="Vallenet D."/>
            <person name="Fonknechten N."/>
            <person name="Kreimeyer A."/>
            <person name="Oztas S."/>
            <person name="Labarre L."/>
            <person name="Cruveiller S."/>
            <person name="Robert C."/>
            <person name="Duprat S."/>
            <person name="Wincker P."/>
            <person name="Ornston L.N."/>
            <person name="Weissenbach J."/>
            <person name="Marliere P."/>
            <person name="Cohen G.N."/>
            <person name="Medigue C."/>
        </authorList>
    </citation>
    <scope>NUCLEOTIDE SEQUENCE [LARGE SCALE GENOMIC DNA]</scope>
    <source>
        <strain>ATCC 33305 / BD413 / ADP1</strain>
    </source>
</reference>